<feature type="chain" id="PRO_1000204563" description="Lysine--tRNA ligase">
    <location>
        <begin position="1"/>
        <end position="502"/>
    </location>
</feature>
<feature type="binding site" evidence="1">
    <location>
        <position position="409"/>
    </location>
    <ligand>
        <name>Mg(2+)</name>
        <dbReference type="ChEBI" id="CHEBI:18420"/>
        <label>1</label>
    </ligand>
</feature>
<feature type="binding site" evidence="1">
    <location>
        <position position="416"/>
    </location>
    <ligand>
        <name>Mg(2+)</name>
        <dbReference type="ChEBI" id="CHEBI:18420"/>
        <label>1</label>
    </ligand>
</feature>
<feature type="binding site" evidence="1">
    <location>
        <position position="416"/>
    </location>
    <ligand>
        <name>Mg(2+)</name>
        <dbReference type="ChEBI" id="CHEBI:18420"/>
        <label>2</label>
    </ligand>
</feature>
<sequence length="502" mass="57391">MRAMTEGLEMHDLLAVRRDKLNQLYDEGINPFGGKFERTHTSNEVIEQFAAFTKEELEEKDDHVVLAGRLMTKRGKGKAGFAHIQDIGGQIQIYVRQDAVGEEAYGLFKSLDIGDMVGVGGRPFKTKVGEMSVKVTELVILGKSLRPLPDKYHGLKDVEQRYRQRYLDLITSPESRTAFITRSKIIQVMRRYLDEKGFLEVETPMMHSIPGGASARPFVTHHNTLDMELYMRIAIELHLKRLIVGGLEKVYEIGRVFRNEGISTRHNPEFTMIELYEAYADYHDIMELTEGVIAHIAKEVLGTTTVQYGEHTVELAPSWKRVHMVDAIKEKTGVDFWQQMSDGEARALAKEHGVPVKETMTFGHVVNEFFEHFIEETLIQPTFVYGHPLAISPLAKKNEEDPRFTDRFELFIVGREHANAFSELNDPIDQRKRFEAQLIEREQGDDEAHRMDEDFIEALEYGMPPTGGLGIGIDRLVMLLTNSPSIRDVILFPQMRNREQGE</sequence>
<accession>Q5WLU5</accession>
<name>SYK_SHOC1</name>
<comment type="catalytic activity">
    <reaction evidence="1">
        <text>tRNA(Lys) + L-lysine + ATP = L-lysyl-tRNA(Lys) + AMP + diphosphate</text>
        <dbReference type="Rhea" id="RHEA:20792"/>
        <dbReference type="Rhea" id="RHEA-COMP:9696"/>
        <dbReference type="Rhea" id="RHEA-COMP:9697"/>
        <dbReference type="ChEBI" id="CHEBI:30616"/>
        <dbReference type="ChEBI" id="CHEBI:32551"/>
        <dbReference type="ChEBI" id="CHEBI:33019"/>
        <dbReference type="ChEBI" id="CHEBI:78442"/>
        <dbReference type="ChEBI" id="CHEBI:78529"/>
        <dbReference type="ChEBI" id="CHEBI:456215"/>
        <dbReference type="EC" id="6.1.1.6"/>
    </reaction>
</comment>
<comment type="cofactor">
    <cofactor evidence="1">
        <name>Mg(2+)</name>
        <dbReference type="ChEBI" id="CHEBI:18420"/>
    </cofactor>
    <text evidence="1">Binds 3 Mg(2+) ions per subunit.</text>
</comment>
<comment type="subunit">
    <text evidence="1">Homodimer.</text>
</comment>
<comment type="subcellular location">
    <subcellularLocation>
        <location evidence="1">Cytoplasm</location>
    </subcellularLocation>
</comment>
<comment type="similarity">
    <text evidence="1">Belongs to the class-II aminoacyl-tRNA synthetase family.</text>
</comment>
<proteinExistence type="inferred from homology"/>
<evidence type="ECO:0000255" key="1">
    <source>
        <dbReference type="HAMAP-Rule" id="MF_00252"/>
    </source>
</evidence>
<dbReference type="EC" id="6.1.1.6" evidence="1"/>
<dbReference type="EMBL" id="AP006627">
    <property type="protein sequence ID" value="BAD62660.1"/>
    <property type="molecule type" value="Genomic_DNA"/>
</dbReference>
<dbReference type="SMR" id="Q5WLU5"/>
<dbReference type="STRING" id="66692.ABC0117"/>
<dbReference type="KEGG" id="bcl:ABC0117"/>
<dbReference type="eggNOG" id="COG1190">
    <property type="taxonomic scope" value="Bacteria"/>
</dbReference>
<dbReference type="HOGENOM" id="CLU_008255_6_0_9"/>
<dbReference type="Proteomes" id="UP000001168">
    <property type="component" value="Chromosome"/>
</dbReference>
<dbReference type="GO" id="GO:0005829">
    <property type="term" value="C:cytosol"/>
    <property type="evidence" value="ECO:0007669"/>
    <property type="project" value="TreeGrafter"/>
</dbReference>
<dbReference type="GO" id="GO:0005524">
    <property type="term" value="F:ATP binding"/>
    <property type="evidence" value="ECO:0007669"/>
    <property type="project" value="UniProtKB-UniRule"/>
</dbReference>
<dbReference type="GO" id="GO:0140096">
    <property type="term" value="F:catalytic activity, acting on a protein"/>
    <property type="evidence" value="ECO:0007669"/>
    <property type="project" value="UniProtKB-ARBA"/>
</dbReference>
<dbReference type="GO" id="GO:0004824">
    <property type="term" value="F:lysine-tRNA ligase activity"/>
    <property type="evidence" value="ECO:0007669"/>
    <property type="project" value="UniProtKB-UniRule"/>
</dbReference>
<dbReference type="GO" id="GO:0000287">
    <property type="term" value="F:magnesium ion binding"/>
    <property type="evidence" value="ECO:0007669"/>
    <property type="project" value="UniProtKB-UniRule"/>
</dbReference>
<dbReference type="GO" id="GO:0016740">
    <property type="term" value="F:transferase activity"/>
    <property type="evidence" value="ECO:0007669"/>
    <property type="project" value="UniProtKB-ARBA"/>
</dbReference>
<dbReference type="GO" id="GO:0000049">
    <property type="term" value="F:tRNA binding"/>
    <property type="evidence" value="ECO:0007669"/>
    <property type="project" value="TreeGrafter"/>
</dbReference>
<dbReference type="GO" id="GO:0006430">
    <property type="term" value="P:lysyl-tRNA aminoacylation"/>
    <property type="evidence" value="ECO:0007669"/>
    <property type="project" value="UniProtKB-UniRule"/>
</dbReference>
<dbReference type="CDD" id="cd00775">
    <property type="entry name" value="LysRS_core"/>
    <property type="match status" value="1"/>
</dbReference>
<dbReference type="CDD" id="cd04322">
    <property type="entry name" value="LysRS_N"/>
    <property type="match status" value="1"/>
</dbReference>
<dbReference type="FunFam" id="2.40.50.140:FF:000024">
    <property type="entry name" value="Lysine--tRNA ligase"/>
    <property type="match status" value="1"/>
</dbReference>
<dbReference type="FunFam" id="3.30.930.10:FF:000001">
    <property type="entry name" value="Lysine--tRNA ligase"/>
    <property type="match status" value="1"/>
</dbReference>
<dbReference type="Gene3D" id="3.30.930.10">
    <property type="entry name" value="Bira Bifunctional Protein, Domain 2"/>
    <property type="match status" value="1"/>
</dbReference>
<dbReference type="Gene3D" id="2.40.50.140">
    <property type="entry name" value="Nucleic acid-binding proteins"/>
    <property type="match status" value="1"/>
</dbReference>
<dbReference type="HAMAP" id="MF_00252">
    <property type="entry name" value="Lys_tRNA_synth_class2"/>
    <property type="match status" value="1"/>
</dbReference>
<dbReference type="InterPro" id="IPR004364">
    <property type="entry name" value="Aa-tRNA-synt_II"/>
</dbReference>
<dbReference type="InterPro" id="IPR006195">
    <property type="entry name" value="aa-tRNA-synth_II"/>
</dbReference>
<dbReference type="InterPro" id="IPR045864">
    <property type="entry name" value="aa-tRNA-synth_II/BPL/LPL"/>
</dbReference>
<dbReference type="InterPro" id="IPR002313">
    <property type="entry name" value="Lys-tRNA-ligase_II"/>
</dbReference>
<dbReference type="InterPro" id="IPR034762">
    <property type="entry name" value="Lys-tRNA-ligase_II_bac/euk"/>
</dbReference>
<dbReference type="InterPro" id="IPR044136">
    <property type="entry name" value="Lys-tRNA-ligase_II_N"/>
</dbReference>
<dbReference type="InterPro" id="IPR018149">
    <property type="entry name" value="Lys-tRNA-synth_II_C"/>
</dbReference>
<dbReference type="InterPro" id="IPR012340">
    <property type="entry name" value="NA-bd_OB-fold"/>
</dbReference>
<dbReference type="InterPro" id="IPR004365">
    <property type="entry name" value="NA-bd_OB_tRNA"/>
</dbReference>
<dbReference type="NCBIfam" id="TIGR00499">
    <property type="entry name" value="lysS_bact"/>
    <property type="match status" value="1"/>
</dbReference>
<dbReference type="NCBIfam" id="NF001756">
    <property type="entry name" value="PRK00484.1"/>
    <property type="match status" value="1"/>
</dbReference>
<dbReference type="PANTHER" id="PTHR42918:SF15">
    <property type="entry name" value="LYSINE--TRNA LIGASE, CHLOROPLASTIC_MITOCHONDRIAL"/>
    <property type="match status" value="1"/>
</dbReference>
<dbReference type="PANTHER" id="PTHR42918">
    <property type="entry name" value="LYSYL-TRNA SYNTHETASE"/>
    <property type="match status" value="1"/>
</dbReference>
<dbReference type="Pfam" id="PF00152">
    <property type="entry name" value="tRNA-synt_2"/>
    <property type="match status" value="1"/>
</dbReference>
<dbReference type="Pfam" id="PF01336">
    <property type="entry name" value="tRNA_anti-codon"/>
    <property type="match status" value="1"/>
</dbReference>
<dbReference type="PIRSF" id="PIRSF039101">
    <property type="entry name" value="LysRS2"/>
    <property type="match status" value="1"/>
</dbReference>
<dbReference type="PRINTS" id="PR00982">
    <property type="entry name" value="TRNASYNTHLYS"/>
</dbReference>
<dbReference type="SUPFAM" id="SSF55681">
    <property type="entry name" value="Class II aaRS and biotin synthetases"/>
    <property type="match status" value="1"/>
</dbReference>
<dbReference type="SUPFAM" id="SSF50249">
    <property type="entry name" value="Nucleic acid-binding proteins"/>
    <property type="match status" value="1"/>
</dbReference>
<dbReference type="PROSITE" id="PS50862">
    <property type="entry name" value="AA_TRNA_LIGASE_II"/>
    <property type="match status" value="1"/>
</dbReference>
<gene>
    <name evidence="1" type="primary">lysS</name>
    <name type="ordered locus">ABC0117</name>
</gene>
<keyword id="KW-0030">Aminoacyl-tRNA synthetase</keyword>
<keyword id="KW-0067">ATP-binding</keyword>
<keyword id="KW-0963">Cytoplasm</keyword>
<keyword id="KW-0436">Ligase</keyword>
<keyword id="KW-0460">Magnesium</keyword>
<keyword id="KW-0479">Metal-binding</keyword>
<keyword id="KW-0547">Nucleotide-binding</keyword>
<keyword id="KW-0648">Protein biosynthesis</keyword>
<keyword id="KW-1185">Reference proteome</keyword>
<protein>
    <recommendedName>
        <fullName evidence="1">Lysine--tRNA ligase</fullName>
        <ecNumber evidence="1">6.1.1.6</ecNumber>
    </recommendedName>
    <alternativeName>
        <fullName evidence="1">Lysyl-tRNA synthetase</fullName>
        <shortName evidence="1">LysRS</shortName>
    </alternativeName>
</protein>
<reference key="1">
    <citation type="submission" date="2003-10" db="EMBL/GenBank/DDBJ databases">
        <title>The complete genome sequence of the alkaliphilic Bacillus clausii KSM-K16.</title>
        <authorList>
            <person name="Takaki Y."/>
            <person name="Kageyama Y."/>
            <person name="Shimamura S."/>
            <person name="Suzuki H."/>
            <person name="Nishi S."/>
            <person name="Hatada Y."/>
            <person name="Kawai S."/>
            <person name="Ito S."/>
            <person name="Horikoshi K."/>
        </authorList>
    </citation>
    <scope>NUCLEOTIDE SEQUENCE [LARGE SCALE GENOMIC DNA]</scope>
    <source>
        <strain>KSM-K16</strain>
    </source>
</reference>
<organism>
    <name type="scientific">Shouchella clausii (strain KSM-K16)</name>
    <name type="common">Alkalihalobacillus clausii</name>
    <dbReference type="NCBI Taxonomy" id="66692"/>
    <lineage>
        <taxon>Bacteria</taxon>
        <taxon>Bacillati</taxon>
        <taxon>Bacillota</taxon>
        <taxon>Bacilli</taxon>
        <taxon>Bacillales</taxon>
        <taxon>Bacillaceae</taxon>
        <taxon>Shouchella</taxon>
    </lineage>
</organism>